<sequence length="2602" mass="277825">MPVTEKDLAEDAPWKKIQQNTFTRWCNEHLKCVNKRIGNLQTDLSDGLRLIALLEVLSQKRMHHKYHQRPTFRQMKLENVSVALEFLDHESIKLVSIDSKAIVDGNLKLILGLVWTLILHYSISMPVWEDEGDDDAKKQTPKQRLLGWIQNKIPYLPITNFNQNWQDGKALGALVDSCAPGLCPDWESWDPRKPVDNAREAMQQADDWLGVPQVITPEEIIHPDVDEHSVMTYLSQFPKAKLKPGAPLKPKLNPKKARAYGRGIEPTGNMVKQPAKFTVDTISAGQGDVMVFVEDPEGNKEEARVTPDSDKNKTYSVEYLPKVTGLHKVIVLFAGQHISKSPFEVNVDKAQGDASKVTAKGPGLETTGNIANKPTYFDIYTAGAGVGDIGIEVEDPQGKNSVELLVEDRGNQVYRCVYKPVQPGPHVVKVSFAGDAIPKSPFGVQIGEACNPNACRASGRGLQPKGVRIRETADFKVDTKAAGSGELGVTVKGPKGLEELVKQKGFLDGVYSFEYYPSTPGKYSVAVTWGGHHIPKSPFEVQVGPEAGMQKVRAWGPGLHGGIVGRSADFVVESIGSEVGTLGFAIEGPSQAKIEYDDQNDGSCDVKYWPKEPGEYAVHIMCDDEDIKDSPYMAFIHPATGDYNPDLVQAYGPGLEKSGCTINNPAEFIVDPKDAGSAPLKILAQDGEGQPIDIQMKSRMDGTYACSYTPLKAIKHTIAVVWGGVNIPHSPYRVNIGQGSHPQKVKVFGPGVERSGLKANEPTHFTVDCTEAGEGDVSVGIKCDARVLSDDEEDVDFDIIHNANDTFTVKYVPPAPGRYTIKVLFASQEIPASPFRVKVDPSHDASKVKAEGPGLSKAGVENGKPTHFTVHTKGAGKAPLNVQFSSPLPGEAVKDLDIIDNYDYSHTVKYTPTQQGNMQVLVTYGGDPIPKSPFTVGVAAPLDLSKIKINGLENRVEVGKDQEFAIDTNGAGGQGKLDVTILSPSRKVVPCLVAPVAGRECSTAKFIPREEGLFAVDVTYDGHPVPGSPYTVEASLPPDPTKVKAHGPGLEGGLVGKPAEFTIDTKGAGTGGLGLTVEGPCEAKIECSDNGDGTCSVSYLPTKPGEYFVNILFEEVHIPGSPFKADIEMPFDPSKVVASGPGLEHGKVGEPGILCVDCSEAGPGTLGLEAVSDSGAKAEVSIQNNKDGTYAVTYVPLTAGMYTLTMKYGGELVPHFPAWVKVEPAIDTSGIKAFGPGIEGKDVFREATTDFTVDSRPLTQVGGDHIKAQITNPSGASTECFVKDNADGTYQVEYTPFEKGFHVVEVTYDDVPIPNSPFKVAVTEGCQPSRVHAQGPGLKEAFTNKSNVFTVVTRGAGIGGLGITVEGPSESKINCRDNKDGSCSAEYIPFAPGDYDVNITYGGVHIPGSPFRVPSKDVVDPSKVKIAGPGLSSCVRACIPQSFTVDSSKAGLAPLEVRVLGPRGLVEPVNVVDNGDGTHTVTYTPSQEGPYIVSVKYADEEIPRSPFKVKVLPTYDASKVTASGPGLSAYGVPASLPVEFAIDARDAGEGLLAVQITDQEGKPQRATVHDNKDGTYAVTYIPDKTGRYMIGVTYGGDNIPLSPYRIRATQTGDASKCLATGPGIAPTVKTGEEVGFVVDAKTAGKGKVTCVILTPDGTEAEADVIENEDGTYDIFYTAAKPGTYVIYVRFGGVDIPNSPFTVMATDGEVTAMEEAPVNACPPGFRPWVTEEAYVPVSDMNGLGFKPFDLVIPFAVRKGEITGTVHMPSGKKATPEIVDNKDGTVTVRYAPTEVGLHEMHIKYRGSHIPESPLQFYVNYPNSGSVSAYGPGLVYGVANKTATFTIVTEDAGEGGLDLAIEGPSKAEISCIDNKDGTCTVTYLPTLPGDYSILVKYNDKHIPGSPFTAKITDDNRRCSQVKLGSAADFLLDISETDLSTLTASIKAPSGRDEPCLLKRLPNNHIGISFIPREVGEHLVSIKKNGNHVANSPVSIMVVQSEIGDARRAKVYGQGLSEGRTFEMSDFIVDTRDAGYGGISLAVEGPSKVDIQTEDLEDGTCKVSYFPTVPGVYIVSTKFADEHVPGSPFTVKISGEGRVRESITRTSRAPAVATVGSICDLNLKIPEINSSDMSAHVTSPSGHVTEAEIVPMGKNSHCVRFVPQEMGVHTVSVKYRGQHVTGSPFQFTVGPLGEGGAHKVRAGGPGLERGEAGIPAEFSIWTREAGAGGLSIAVEGPSKAEITFDDHKNGSCGVSYIAQEPGNYEVSIKFNDEHIPDSPYLVPVIAPSDDARCLTVLSLQESGLKVNQPASFAIRLNGAKGKIDAKVHSPSGAVEECHVSELEPDKYAVRFIPHENGIHTIDVKFNGSHVVGSPFKVRVGEPGQAGNPALVSAYGAGLETGTTGIQSEFFINTTQAGPGTLSVTIEGPSKVKMDCQEIPEGYKVMYTPMAPGNYLIGVKYGGPNHISRSPFKAKVTGQRLVSPGSANETSSILVESVTRSSTETCYSAIPKSSSDASKVTSKGAGLSKAFVGQKSSFLVDCSKAGSNMLLIGVHGPTTPCEEVSMKHVGKQQYNVTYVVKERGDYVLAVKWGEEHIPGSPFHVTVP</sequence>
<gene>
    <name type="primary">Flnb</name>
</gene>
<evidence type="ECO:0000250" key="1"/>
<evidence type="ECO:0000250" key="2">
    <source>
        <dbReference type="UniProtKB" id="O75369"/>
    </source>
</evidence>
<evidence type="ECO:0000255" key="3">
    <source>
        <dbReference type="PROSITE-ProRule" id="PRU00044"/>
    </source>
</evidence>
<evidence type="ECO:0000256" key="4">
    <source>
        <dbReference type="SAM" id="MobiDB-lite"/>
    </source>
</evidence>
<evidence type="ECO:0000269" key="5">
    <source>
    </source>
</evidence>
<evidence type="ECO:0000269" key="6">
    <source>
    </source>
</evidence>
<evidence type="ECO:0000269" key="7">
    <source>
    </source>
</evidence>
<evidence type="ECO:0000269" key="8">
    <source>
    </source>
</evidence>
<evidence type="ECO:0000305" key="9"/>
<evidence type="ECO:0007744" key="10">
    <source>
    </source>
</evidence>
<dbReference type="EMBL" id="AC129222">
    <property type="status" value="NOT_ANNOTATED_CDS"/>
    <property type="molecule type" value="Genomic_DNA"/>
</dbReference>
<dbReference type="EMBL" id="AC140322">
    <property type="status" value="NOT_ANNOTATED_CDS"/>
    <property type="molecule type" value="Genomic_DNA"/>
</dbReference>
<dbReference type="EMBL" id="AF353669">
    <property type="protein sequence ID" value="AAL68445.1"/>
    <property type="molecule type" value="mRNA"/>
</dbReference>
<dbReference type="EMBL" id="AF353672">
    <property type="protein sequence ID" value="AAL68448.1"/>
    <property type="molecule type" value="mRNA"/>
</dbReference>
<dbReference type="EMBL" id="BC003959">
    <property type="protein sequence ID" value="AAH03959.1"/>
    <property type="molecule type" value="mRNA"/>
</dbReference>
<dbReference type="EMBL" id="BC048835">
    <property type="protein sequence ID" value="AAH48835.1"/>
    <property type="molecule type" value="mRNA"/>
</dbReference>
<dbReference type="CCDS" id="CCDS70540.1"/>
<dbReference type="RefSeq" id="NP_001074896.1">
    <property type="nucleotide sequence ID" value="NM_001081427.1"/>
</dbReference>
<dbReference type="SMR" id="Q80X90"/>
<dbReference type="BioGRID" id="235046">
    <property type="interactions" value="117"/>
</dbReference>
<dbReference type="FunCoup" id="Q80X90">
    <property type="interactions" value="1390"/>
</dbReference>
<dbReference type="IntAct" id="Q80X90">
    <property type="interactions" value="107"/>
</dbReference>
<dbReference type="STRING" id="10090.ENSMUSP00000052020"/>
<dbReference type="GlyGen" id="Q80X90">
    <property type="glycosylation" value="4 sites, 1 N-linked glycan (1 site), 1 O-linked glycan (1 site)"/>
</dbReference>
<dbReference type="iPTMnet" id="Q80X90"/>
<dbReference type="PhosphoSitePlus" id="Q80X90"/>
<dbReference type="SwissPalm" id="Q80X90"/>
<dbReference type="jPOST" id="Q80X90"/>
<dbReference type="PaxDb" id="10090-ENSMUSP00000052020"/>
<dbReference type="PeptideAtlas" id="Q80X90"/>
<dbReference type="ProteomicsDB" id="267597"/>
<dbReference type="Pumba" id="Q80X90"/>
<dbReference type="Antibodypedia" id="1496">
    <property type="antibodies" value="306 antibodies from 34 providers"/>
</dbReference>
<dbReference type="DNASU" id="286940"/>
<dbReference type="Ensembl" id="ENSMUST00000052678.9">
    <property type="protein sequence ID" value="ENSMUSP00000052020.9"/>
    <property type="gene ID" value="ENSMUSG00000025278.10"/>
</dbReference>
<dbReference type="GeneID" id="286940"/>
<dbReference type="KEGG" id="mmu:286940"/>
<dbReference type="UCSC" id="uc007sek.1">
    <property type="organism name" value="mouse"/>
</dbReference>
<dbReference type="AGR" id="MGI:2446089"/>
<dbReference type="CTD" id="2317"/>
<dbReference type="MGI" id="MGI:2446089">
    <property type="gene designation" value="Flnb"/>
</dbReference>
<dbReference type="VEuPathDB" id="HostDB:ENSMUSG00000025278"/>
<dbReference type="eggNOG" id="KOG0518">
    <property type="taxonomic scope" value="Eukaryota"/>
</dbReference>
<dbReference type="GeneTree" id="ENSGT00940000156286"/>
<dbReference type="HOGENOM" id="CLU_000783_0_0_1"/>
<dbReference type="InParanoid" id="Q80X90"/>
<dbReference type="OMA" id="RAVPCKV"/>
<dbReference type="OrthoDB" id="5334309at2759"/>
<dbReference type="PhylomeDB" id="Q80X90"/>
<dbReference type="TreeFam" id="TF313685"/>
<dbReference type="Reactome" id="R-MMU-1169408">
    <property type="pathway name" value="ISG15 antiviral mechanism"/>
</dbReference>
<dbReference type="BioGRID-ORCS" id="286940">
    <property type="hits" value="4 hits in 71 CRISPR screens"/>
</dbReference>
<dbReference type="ChiTaRS" id="Flnb">
    <property type="organism name" value="mouse"/>
</dbReference>
<dbReference type="PRO" id="PR:Q80X90"/>
<dbReference type="Proteomes" id="UP000000589">
    <property type="component" value="Chromosome 14"/>
</dbReference>
<dbReference type="RNAct" id="Q80X90">
    <property type="molecule type" value="protein"/>
</dbReference>
<dbReference type="Bgee" id="ENSMUSG00000025278">
    <property type="expression patterns" value="Expressed in humerus cartilage element and 280 other cell types or tissues"/>
</dbReference>
<dbReference type="GO" id="GO:0005903">
    <property type="term" value="C:brush border"/>
    <property type="evidence" value="ECO:0000314"/>
    <property type="project" value="UniProtKB"/>
</dbReference>
<dbReference type="GO" id="GO:0005938">
    <property type="term" value="C:cell cortex"/>
    <property type="evidence" value="ECO:0007669"/>
    <property type="project" value="UniProtKB-SubCell"/>
</dbReference>
<dbReference type="GO" id="GO:0005737">
    <property type="term" value="C:cytoplasm"/>
    <property type="evidence" value="ECO:0000247"/>
    <property type="project" value="MGI"/>
</dbReference>
<dbReference type="GO" id="GO:0005829">
    <property type="term" value="C:cytosol"/>
    <property type="evidence" value="ECO:0007669"/>
    <property type="project" value="Ensembl"/>
</dbReference>
<dbReference type="GO" id="GO:0005925">
    <property type="term" value="C:focal adhesion"/>
    <property type="evidence" value="ECO:0000314"/>
    <property type="project" value="MGI"/>
</dbReference>
<dbReference type="GO" id="GO:0043025">
    <property type="term" value="C:neuronal cell body"/>
    <property type="evidence" value="ECO:0007669"/>
    <property type="project" value="Ensembl"/>
</dbReference>
<dbReference type="GO" id="GO:0045335">
    <property type="term" value="C:phagocytic vesicle"/>
    <property type="evidence" value="ECO:0000314"/>
    <property type="project" value="MGI"/>
</dbReference>
<dbReference type="GO" id="GO:0005886">
    <property type="term" value="C:plasma membrane"/>
    <property type="evidence" value="ECO:0007669"/>
    <property type="project" value="Ensembl"/>
</dbReference>
<dbReference type="GO" id="GO:0001725">
    <property type="term" value="C:stress fiber"/>
    <property type="evidence" value="ECO:0000314"/>
    <property type="project" value="MGI"/>
</dbReference>
<dbReference type="GO" id="GO:0030018">
    <property type="term" value="C:Z disc"/>
    <property type="evidence" value="ECO:0007669"/>
    <property type="project" value="UniProtKB-SubCell"/>
</dbReference>
<dbReference type="GO" id="GO:0051015">
    <property type="term" value="F:actin filament binding"/>
    <property type="evidence" value="ECO:0007669"/>
    <property type="project" value="InterPro"/>
</dbReference>
<dbReference type="GO" id="GO:0042802">
    <property type="term" value="F:identical protein binding"/>
    <property type="evidence" value="ECO:0007669"/>
    <property type="project" value="Ensembl"/>
</dbReference>
<dbReference type="GO" id="GO:0030036">
    <property type="term" value="P:actin cytoskeleton organization"/>
    <property type="evidence" value="ECO:0000315"/>
    <property type="project" value="MGI"/>
</dbReference>
<dbReference type="GO" id="GO:0071346">
    <property type="term" value="P:cellular response to type II interferon"/>
    <property type="evidence" value="ECO:0000314"/>
    <property type="project" value="MGI"/>
</dbReference>
<dbReference type="GO" id="GO:0003382">
    <property type="term" value="P:epithelial cell morphogenesis"/>
    <property type="evidence" value="ECO:0000315"/>
    <property type="project" value="MGI"/>
</dbReference>
<dbReference type="GO" id="GO:0003334">
    <property type="term" value="P:keratinocyte development"/>
    <property type="evidence" value="ECO:0000315"/>
    <property type="project" value="MGI"/>
</dbReference>
<dbReference type="GO" id="GO:0007519">
    <property type="term" value="P:skeletal muscle tissue development"/>
    <property type="evidence" value="ECO:0000314"/>
    <property type="project" value="MGI"/>
</dbReference>
<dbReference type="CDD" id="cd21309">
    <property type="entry name" value="CH_FLNB_rpt1"/>
    <property type="match status" value="1"/>
</dbReference>
<dbReference type="CDD" id="cd21313">
    <property type="entry name" value="CH_FLNB_rpt2"/>
    <property type="match status" value="1"/>
</dbReference>
<dbReference type="FunFam" id="1.10.418.10:FF:000006">
    <property type="entry name" value="Filamin-B isoform A"/>
    <property type="match status" value="1"/>
</dbReference>
<dbReference type="FunFam" id="2.60.40.10:FF:000042">
    <property type="entry name" value="Filamin-B isoform B"/>
    <property type="match status" value="2"/>
</dbReference>
<dbReference type="FunFam" id="2.60.40.10:FF:000092">
    <property type="entry name" value="Filamin-B isoform B"/>
    <property type="match status" value="1"/>
</dbReference>
<dbReference type="FunFam" id="1.10.418.10:FF:000008">
    <property type="entry name" value="Filamin-B isoform C"/>
    <property type="match status" value="1"/>
</dbReference>
<dbReference type="FunFam" id="2.60.40.10:FF:000007">
    <property type="entry name" value="Filamin-B isoform C"/>
    <property type="match status" value="3"/>
</dbReference>
<dbReference type="FunFam" id="2.60.40.10:FF:000079">
    <property type="entry name" value="Filamin-B isoform C"/>
    <property type="match status" value="1"/>
</dbReference>
<dbReference type="FunFam" id="2.60.40.10:FF:000125">
    <property type="entry name" value="filamin-B isoform X1"/>
    <property type="match status" value="1"/>
</dbReference>
<dbReference type="FunFam" id="2.60.40.10:FF:000138">
    <property type="entry name" value="filamin-B isoform X1"/>
    <property type="match status" value="1"/>
</dbReference>
<dbReference type="FunFam" id="2.60.40.10:FF:000154">
    <property type="entry name" value="filamin-B isoform X1"/>
    <property type="match status" value="1"/>
</dbReference>
<dbReference type="FunFam" id="2.60.40.10:FF:000102">
    <property type="entry name" value="filamin-B isoform X2"/>
    <property type="match status" value="1"/>
</dbReference>
<dbReference type="FunFam" id="2.60.40.10:FF:000001">
    <property type="entry name" value="Filamin-C isoform b"/>
    <property type="match status" value="5"/>
</dbReference>
<dbReference type="FunFam" id="2.60.40.10:FF:000105">
    <property type="entry name" value="filamin-C isoform X1"/>
    <property type="match status" value="1"/>
</dbReference>
<dbReference type="FunFam" id="2.60.40.10:FF:000115">
    <property type="entry name" value="filamin-C isoform X1"/>
    <property type="match status" value="1"/>
</dbReference>
<dbReference type="FunFam" id="2.60.40.10:FF:000126">
    <property type="entry name" value="filamin-C isoform X1"/>
    <property type="match status" value="1"/>
</dbReference>
<dbReference type="FunFam" id="2.60.40.10:FF:000157">
    <property type="entry name" value="filamin-C isoform X1"/>
    <property type="match status" value="1"/>
</dbReference>
<dbReference type="FunFam" id="2.60.40.10:FF:000096">
    <property type="entry name" value="filamin-C isoform X2"/>
    <property type="match status" value="1"/>
</dbReference>
<dbReference type="FunFam" id="2.60.40.10:FF:000118">
    <property type="entry name" value="filamin-C isoform X2"/>
    <property type="match status" value="1"/>
</dbReference>
<dbReference type="FunFam" id="2.60.40.10:FF:000122">
    <property type="entry name" value="filamin-C isoform X2"/>
    <property type="match status" value="1"/>
</dbReference>
<dbReference type="FunFam" id="2.60.40.10:FF:000168">
    <property type="entry name" value="filamin-C isoform X2"/>
    <property type="match status" value="1"/>
</dbReference>
<dbReference type="Gene3D" id="1.10.418.10">
    <property type="entry name" value="Calponin-like domain"/>
    <property type="match status" value="2"/>
</dbReference>
<dbReference type="Gene3D" id="2.60.40.10">
    <property type="entry name" value="Immunoglobulins"/>
    <property type="match status" value="24"/>
</dbReference>
<dbReference type="InterPro" id="IPR001589">
    <property type="entry name" value="Actinin_actin-bd_CS"/>
</dbReference>
<dbReference type="InterPro" id="IPR001715">
    <property type="entry name" value="CH_dom"/>
</dbReference>
<dbReference type="InterPro" id="IPR036872">
    <property type="entry name" value="CH_dom_sf"/>
</dbReference>
<dbReference type="InterPro" id="IPR044801">
    <property type="entry name" value="Filamin"/>
</dbReference>
<dbReference type="InterPro" id="IPR017868">
    <property type="entry name" value="Filamin/ABP280_repeat-like"/>
</dbReference>
<dbReference type="InterPro" id="IPR001298">
    <property type="entry name" value="Filamin/ABP280_rpt"/>
</dbReference>
<dbReference type="InterPro" id="IPR013783">
    <property type="entry name" value="Ig-like_fold"/>
</dbReference>
<dbReference type="InterPro" id="IPR014756">
    <property type="entry name" value="Ig_E-set"/>
</dbReference>
<dbReference type="PANTHER" id="PTHR38537:SF7">
    <property type="entry name" value="FILAMIN-B"/>
    <property type="match status" value="1"/>
</dbReference>
<dbReference type="PANTHER" id="PTHR38537">
    <property type="entry name" value="JITTERBUG, ISOFORM N"/>
    <property type="match status" value="1"/>
</dbReference>
<dbReference type="Pfam" id="PF00307">
    <property type="entry name" value="CH"/>
    <property type="match status" value="2"/>
</dbReference>
<dbReference type="Pfam" id="PF00630">
    <property type="entry name" value="Filamin"/>
    <property type="match status" value="24"/>
</dbReference>
<dbReference type="SMART" id="SM00033">
    <property type="entry name" value="CH"/>
    <property type="match status" value="2"/>
</dbReference>
<dbReference type="SMART" id="SM00557">
    <property type="entry name" value="IG_FLMN"/>
    <property type="match status" value="24"/>
</dbReference>
<dbReference type="SUPFAM" id="SSF47576">
    <property type="entry name" value="Calponin-homology domain, CH-domain"/>
    <property type="match status" value="1"/>
</dbReference>
<dbReference type="SUPFAM" id="SSF81296">
    <property type="entry name" value="E set domains"/>
    <property type="match status" value="24"/>
</dbReference>
<dbReference type="PROSITE" id="PS00019">
    <property type="entry name" value="ACTININ_1"/>
    <property type="match status" value="1"/>
</dbReference>
<dbReference type="PROSITE" id="PS00020">
    <property type="entry name" value="ACTININ_2"/>
    <property type="match status" value="1"/>
</dbReference>
<dbReference type="PROSITE" id="PS50021">
    <property type="entry name" value="CH"/>
    <property type="match status" value="2"/>
</dbReference>
<dbReference type="PROSITE" id="PS50194">
    <property type="entry name" value="FILAMIN_REPEAT"/>
    <property type="match status" value="24"/>
</dbReference>
<protein>
    <recommendedName>
        <fullName>Filamin-B</fullName>
        <shortName>FLN-B</shortName>
    </recommendedName>
    <alternativeName>
        <fullName>ABP-280-like protein</fullName>
    </alternativeName>
    <alternativeName>
        <fullName>Actin-binding-like protein</fullName>
    </alternativeName>
    <alternativeName>
        <fullName>Beta-filamin</fullName>
    </alternativeName>
</protein>
<keyword id="KW-0007">Acetylation</keyword>
<keyword id="KW-0009">Actin-binding</keyword>
<keyword id="KW-0963">Cytoplasm</keyword>
<keyword id="KW-0206">Cytoskeleton</keyword>
<keyword id="KW-1017">Isopeptide bond</keyword>
<keyword id="KW-0597">Phosphoprotein</keyword>
<keyword id="KW-1185">Reference proteome</keyword>
<keyword id="KW-0677">Repeat</keyword>
<keyword id="KW-0832">Ubl conjugation</keyword>
<accession>Q80X90</accession>
<accession>E9QNV9</accession>
<accession>Q8VHX4</accession>
<accession>Q8VHX7</accession>
<accession>Q99KY3</accession>
<reference key="1">
    <citation type="journal article" date="2009" name="PLoS Biol.">
        <title>Lineage-specific biology revealed by a finished genome assembly of the mouse.</title>
        <authorList>
            <person name="Church D.M."/>
            <person name="Goodstadt L."/>
            <person name="Hillier L.W."/>
            <person name="Zody M.C."/>
            <person name="Goldstein S."/>
            <person name="She X."/>
            <person name="Bult C.J."/>
            <person name="Agarwala R."/>
            <person name="Cherry J.L."/>
            <person name="DiCuccio M."/>
            <person name="Hlavina W."/>
            <person name="Kapustin Y."/>
            <person name="Meric P."/>
            <person name="Maglott D."/>
            <person name="Birtle Z."/>
            <person name="Marques A.C."/>
            <person name="Graves T."/>
            <person name="Zhou S."/>
            <person name="Teague B."/>
            <person name="Potamousis K."/>
            <person name="Churas C."/>
            <person name="Place M."/>
            <person name="Herschleb J."/>
            <person name="Runnheim R."/>
            <person name="Forrest D."/>
            <person name="Amos-Landgraf J."/>
            <person name="Schwartz D.C."/>
            <person name="Cheng Z."/>
            <person name="Lindblad-Toh K."/>
            <person name="Eichler E.E."/>
            <person name="Ponting C.P."/>
        </authorList>
    </citation>
    <scope>NUCLEOTIDE SEQUENCE [LARGE SCALE GENOMIC DNA]</scope>
    <source>
        <strain>C57BL/6J</strain>
    </source>
</reference>
<reference key="2">
    <citation type="journal article" date="2002" name="J. Cell Biol.">
        <title>Different splice variants of filamin-B affect myogenesis, subcellular distribution, and determine binding to integrin (beta) subunits.</title>
        <authorList>
            <person name="van Der Flier A."/>
            <person name="Kuikman I."/>
            <person name="Kramer D."/>
            <person name="Geerts D."/>
            <person name="Kreft M."/>
            <person name="Takafuta T."/>
            <person name="Shapiro S.S."/>
            <person name="Sonnenberg A."/>
        </authorList>
    </citation>
    <scope>NUCLEOTIDE SEQUENCE [MRNA] OF 1663-1752 AND 2031-2181</scope>
    <source>
        <strain>C3H/HeJ</strain>
    </source>
</reference>
<reference key="3">
    <citation type="journal article" date="2004" name="Genome Res.">
        <title>The status, quality, and expansion of the NIH full-length cDNA project: the Mammalian Gene Collection (MGC).</title>
        <authorList>
            <consortium name="The MGC Project Team"/>
        </authorList>
    </citation>
    <scope>NUCLEOTIDE SEQUENCE [LARGE SCALE MRNA] OF 1884-2602</scope>
    <source>
        <strain>FVB/N</strain>
        <tissue>Mammary tumor</tissue>
        <tissue>Salivary gland</tissue>
    </source>
</reference>
<reference key="4">
    <citation type="journal article" date="2002" name="Hum. Mol. Genet.">
        <title>Filamin A and filamin B are co-expressed within neurons during periods of neuronal migration and can physically interact.</title>
        <authorList>
            <person name="Sheen V.L."/>
            <person name="Feng Y."/>
            <person name="Graham D."/>
            <person name="Takafuta T."/>
            <person name="Shapiro S.S."/>
            <person name="Walsh C.A."/>
        </authorList>
    </citation>
    <scope>DEVELOPMENTAL STAGE</scope>
    <scope>TISSUE SPECIFICITY</scope>
</reference>
<reference key="5">
    <citation type="journal article" date="2005" name="Nat. Biotechnol.">
        <title>Immunoaffinity profiling of tyrosine phosphorylation in cancer cells.</title>
        <authorList>
            <person name="Rush J."/>
            <person name="Moritz A."/>
            <person name="Lee K.A."/>
            <person name="Guo A."/>
            <person name="Goss V.L."/>
            <person name="Spek E.J."/>
            <person name="Zhang H."/>
            <person name="Zha X.-M."/>
            <person name="Polakiewicz R.D."/>
            <person name="Comb M.J."/>
        </authorList>
    </citation>
    <scope>IDENTIFICATION BY MASS SPECTROMETRY [LARGE SCALE ANALYSIS]</scope>
</reference>
<reference key="6">
    <citation type="journal article" date="2010" name="Cell">
        <title>A tissue-specific atlas of mouse protein phosphorylation and expression.</title>
        <authorList>
            <person name="Huttlin E.L."/>
            <person name="Jedrychowski M.P."/>
            <person name="Elias J.E."/>
            <person name="Goswami T."/>
            <person name="Rad R."/>
            <person name="Beausoleil S.A."/>
            <person name="Villen J."/>
            <person name="Haas W."/>
            <person name="Sowa M.E."/>
            <person name="Gygi S.P."/>
        </authorList>
    </citation>
    <scope>IDENTIFICATION BY MASS SPECTROMETRY [LARGE SCALE ANALYSIS]</scope>
    <source>
        <tissue>Brain</tissue>
        <tissue>Brown adipose tissue</tissue>
        <tissue>Heart</tissue>
        <tissue>Kidney</tissue>
        <tissue>Liver</tissue>
        <tissue>Lung</tissue>
        <tissue>Pancreas</tissue>
        <tissue>Spleen</tissue>
        <tissue>Testis</tissue>
    </source>
</reference>
<reference key="7">
    <citation type="journal article" date="2011" name="Proc. Natl. Acad. Sci. U.S.A.">
        <title>RefilinB (FAM101B) targets filamin A to organize perinuclear actin networks and regulates nuclear shape.</title>
        <authorList>
            <person name="Gay O."/>
            <person name="Gilquin B."/>
            <person name="Nakamura F."/>
            <person name="Jenkins Z.A."/>
            <person name="McCartney R."/>
            <person name="Krakow D."/>
            <person name="Deshiere A."/>
            <person name="Assard N."/>
            <person name="Hartwig J.H."/>
            <person name="Robertson S.P."/>
            <person name="Baudier J."/>
        </authorList>
    </citation>
    <scope>INTERACTION WITH RFLNA AND RFLNB</scope>
</reference>
<reference key="8">
    <citation type="journal article" date="2013" name="Genes Cells">
        <title>Junctional Rab13-binding protein (JRAB) regulates cell spreading via filamins.</title>
        <authorList>
            <person name="Sakane A."/>
            <person name="Alamir Mahmoud Abdallah A."/>
            <person name="Nakano K."/>
            <person name="Honda K."/>
            <person name="Kitamura T."/>
            <person name="Imoto I."/>
            <person name="Matsushita N."/>
            <person name="Sasaki T."/>
        </authorList>
    </citation>
    <scope>INTERACTION WITH MICALL2</scope>
</reference>
<reference key="9">
    <citation type="journal article" date="2013" name="Mol. Cell">
        <title>SIRT5-mediated lysine desuccinylation impacts diverse metabolic pathways.</title>
        <authorList>
            <person name="Park J."/>
            <person name="Chen Y."/>
            <person name="Tishkoff D.X."/>
            <person name="Peng C."/>
            <person name="Tan M."/>
            <person name="Dai L."/>
            <person name="Xie Z."/>
            <person name="Zhang Y."/>
            <person name="Zwaans B.M."/>
            <person name="Skinner M.E."/>
            <person name="Lombard D.B."/>
            <person name="Zhao Y."/>
        </authorList>
    </citation>
    <scope>ACETYLATION [LARGE SCALE ANALYSIS] AT LYS-1780</scope>
    <scope>SUCCINYLATION [LARGE SCALE ANALYSIS] AT LYS-2518 AND LYS-2524</scope>
    <scope>IDENTIFICATION BY MASS SPECTROMETRY [LARGE SCALE ANALYSIS]</scope>
    <source>
        <tissue>Embryonic fibroblast</tissue>
    </source>
</reference>
<reference key="10">
    <citation type="journal article" date="2014" name="Hum. Mol. Genet.">
        <title>Filamin-interacting proteins, Cfm1 and Cfm2, are essential for the formation of cartilaginous skeletal elements.</title>
        <authorList>
            <person name="Mizuhashi K."/>
            <person name="Kanamoto T."/>
            <person name="Moriishi T."/>
            <person name="Muranishi Y."/>
            <person name="Miyazaki T."/>
            <person name="Terada K."/>
            <person name="Omori Y."/>
            <person name="Ito M."/>
            <person name="Komori T."/>
            <person name="Furukawa T."/>
        </authorList>
    </citation>
    <scope>INTERACTION WITH RFLNA AND RFLNB</scope>
</reference>
<reference key="11">
    <citation type="journal article" date="2015" name="J. Mol. Cell. Cardiol.">
        <title>The E3 ubiquitin ligase Asb2beta is downregulated in a mouse model of hypertrophic cardiomyopathy and targets desmin for proteasomal degradation.</title>
        <authorList>
            <person name="Thottakara T."/>
            <person name="Friedrich F.W."/>
            <person name="Reischmann S."/>
            <person name="Braumann S."/>
            <person name="Schlossarek S."/>
            <person name="Kraemer E."/>
            <person name="Juhr D."/>
            <person name="Schlueter H."/>
            <person name="van der Velden J."/>
            <person name="Muench J."/>
            <person name="Patten M."/>
            <person name="Eschenhagen T."/>
            <person name="Moog-Lutz C."/>
            <person name="Carrier L."/>
        </authorList>
    </citation>
    <scope>INTERACTION WITH ASB2</scope>
    <scope>SUBCELLULAR LOCATION</scope>
    <scope>PROTEASOMAL DEGRADATION</scope>
</reference>
<comment type="function">
    <text evidence="1">Connects cell membrane constituents to the actin cytoskeleton. May promote orthogonal branching of actin filaments and links actin filaments to membrane glycoproteins. Anchors various transmembrane proteins to the actin cytoskeleton (By similarity).</text>
</comment>
<comment type="subunit">
    <text evidence="1 6 7 8">Homodimer. Interacts with FLNA, FLNC, INPPL1, ITGB1A, ITGB1D, ITGB3, ITGB6, MYOT, MYOZ1, PSEN1 and PSEN2 (By similarity). Interacts with MICALL2. Interacts with RFLNA and RFLNB (PubMed:21709252, PubMed:24436304). Interacts with ASB2 isoform 1; the interaction targets FLNB for proteasomal degradation (PubMed:26343497).</text>
</comment>
<comment type="subcellular location">
    <subcellularLocation>
        <location>Cytoplasm</location>
        <location>Cell cortex</location>
    </subcellularLocation>
    <subcellularLocation>
        <location>Cytoplasm</location>
        <location>Cytoskeleton</location>
    </subcellularLocation>
    <subcellularLocation>
        <location evidence="2">Cytoplasm</location>
        <location evidence="2">Cytoskeleton</location>
        <location evidence="2">Stress fiber</location>
    </subcellularLocation>
    <subcellularLocation>
        <location evidence="8">Cytoplasm</location>
        <location evidence="8">Myofibril</location>
        <location evidence="8">Sarcomere</location>
        <location evidence="8">Z line</location>
    </subcellularLocation>
</comment>
<comment type="tissue specificity">
    <text evidence="5">Expressed in hippocampus, cortex, cerebellar Purkinje cells and granule cell layers.</text>
</comment>
<comment type="developmental stage">
    <text evidence="5">Expressed within the ventricular, periventricular and subventricular zones at 12.5 dpc; olfactory epithelium, radial glial fibers, cortical plate and lateral ventricles at 16 dpc; in a lesser degree in lung, renal cortices and alimentary tract.</text>
</comment>
<comment type="domain">
    <text evidence="1">Comprised of a NH2-terminal actin-binding domain, 24 internally homologous repeats and two hinge regions. Repeat 24 and the second hinge domain are important for dimer formation. The first hinge region prevents binding to ITGA and ITGB subunits (By similarity).</text>
</comment>
<comment type="PTM">
    <text evidence="1">ISGylation prevents ability to interact with the upstream activators of the JNK cascade and inhibits IFNA-induced JNK signaling.</text>
</comment>
<comment type="PTM">
    <text evidence="8">Ubiquitination by a SCF-like complex containing ASB2 isoform 1 leads to proteasomal degradation which promotes muscle differentiation.</text>
</comment>
<comment type="similarity">
    <text evidence="9">Belongs to the filamin family.</text>
</comment>
<proteinExistence type="evidence at protein level"/>
<feature type="chain" id="PRO_0000087299" description="Filamin-B">
    <location>
        <begin position="1"/>
        <end position="2602"/>
    </location>
</feature>
<feature type="domain" description="Calponin-homology (CH) 1" evidence="3">
    <location>
        <begin position="16"/>
        <end position="122"/>
    </location>
</feature>
<feature type="domain" description="Calponin-homology (CH) 2" evidence="3">
    <location>
        <begin position="139"/>
        <end position="242"/>
    </location>
</feature>
<feature type="repeat" description="Filamin 1">
    <location>
        <begin position="249"/>
        <end position="347"/>
    </location>
</feature>
<feature type="repeat" description="Filamin 2">
    <location>
        <begin position="349"/>
        <end position="446"/>
    </location>
</feature>
<feature type="repeat" description="Filamin 3">
    <location>
        <begin position="447"/>
        <end position="543"/>
    </location>
</feature>
<feature type="repeat" description="Filamin 4">
    <location>
        <begin position="544"/>
        <end position="636"/>
    </location>
</feature>
<feature type="repeat" description="Filamin 5">
    <location>
        <begin position="640"/>
        <end position="736"/>
    </location>
</feature>
<feature type="repeat" description="Filamin 6">
    <location>
        <begin position="737"/>
        <end position="839"/>
    </location>
</feature>
<feature type="repeat" description="Filamin 7">
    <location>
        <begin position="840"/>
        <end position="938"/>
    </location>
</feature>
<feature type="repeat" description="Filamin 8">
    <location>
        <begin position="939"/>
        <end position="1034"/>
    </location>
</feature>
<feature type="repeat" description="Filamin 9">
    <location>
        <begin position="1035"/>
        <end position="1127"/>
    </location>
</feature>
<feature type="repeat" description="Filamin 10">
    <location>
        <begin position="1128"/>
        <end position="1222"/>
    </location>
</feature>
<feature type="repeat" description="Filamin 11">
    <location>
        <begin position="1223"/>
        <end position="1322"/>
    </location>
</feature>
<feature type="repeat" description="Filamin 12">
    <location>
        <begin position="1323"/>
        <end position="1415"/>
    </location>
</feature>
<feature type="repeat" description="Filamin 13">
    <location>
        <begin position="1416"/>
        <end position="1511"/>
    </location>
</feature>
<feature type="repeat" description="Filamin 14">
    <location>
        <begin position="1512"/>
        <end position="1608"/>
    </location>
</feature>
<feature type="repeat" description="Filamin 15">
    <location>
        <begin position="1609"/>
        <end position="1704"/>
    </location>
</feature>
<feature type="repeat" description="Filamin 16">
    <location>
        <begin position="1729"/>
        <end position="1813"/>
    </location>
</feature>
<feature type="repeat" description="Filamin 17">
    <location>
        <begin position="1816"/>
        <end position="1908"/>
    </location>
</feature>
<feature type="repeat" description="Filamin 18">
    <location>
        <begin position="1919"/>
        <end position="1994"/>
    </location>
</feature>
<feature type="repeat" description="Filamin 19">
    <location>
        <begin position="1997"/>
        <end position="2089"/>
    </location>
</feature>
<feature type="repeat" description="Filamin 20">
    <location>
        <begin position="2091"/>
        <end position="2185"/>
    </location>
</feature>
<feature type="repeat" description="Filamin 21">
    <location>
        <begin position="2188"/>
        <end position="2280"/>
    </location>
</feature>
<feature type="repeat" description="Filamin 22">
    <location>
        <begin position="2282"/>
        <end position="2375"/>
    </location>
</feature>
<feature type="repeat" description="Filamin 23">
    <location>
        <begin position="2379"/>
        <end position="2471"/>
    </location>
</feature>
<feature type="repeat" description="Filamin 24">
    <location>
        <begin position="2507"/>
        <end position="2601"/>
    </location>
</feature>
<feature type="region of interest" description="Actin-binding">
    <location>
        <begin position="1"/>
        <end position="239"/>
    </location>
</feature>
<feature type="region of interest" description="Disordered" evidence="4">
    <location>
        <begin position="244"/>
        <end position="267"/>
    </location>
</feature>
<feature type="region of interest" description="Disordered" evidence="4">
    <location>
        <begin position="837"/>
        <end position="862"/>
    </location>
</feature>
<feature type="region of interest" description="Hinge 1" evidence="1">
    <location>
        <begin position="1705"/>
        <end position="1728"/>
    </location>
</feature>
<feature type="region of interest" description="Self-association site, tail" evidence="1">
    <location>
        <begin position="2472"/>
        <end position="2602"/>
    </location>
</feature>
<feature type="region of interest" description="Hinge 2" evidence="1">
    <location>
        <begin position="2472"/>
        <end position="2506"/>
    </location>
</feature>
<feature type="compositionally biased region" description="Basic and acidic residues" evidence="4">
    <location>
        <begin position="837"/>
        <end position="850"/>
    </location>
</feature>
<feature type="modified residue" description="Phosphothreonine" evidence="2">
    <location>
        <position position="216"/>
    </location>
</feature>
<feature type="modified residue" description="Phosphothreonine" evidence="2">
    <location>
        <position position="519"/>
    </location>
</feature>
<feature type="modified residue" description="N6-acetyllysine" evidence="2">
    <location>
        <position position="681"/>
    </location>
</feature>
<feature type="modified residue" description="Phosphoserine" evidence="2">
    <location>
        <position position="730"/>
    </location>
</feature>
<feature type="modified residue" description="Phosphoserine" evidence="2">
    <location>
        <position position="886"/>
    </location>
</feature>
<feature type="modified residue" description="Phosphoserine" evidence="2">
    <location>
        <position position="932"/>
    </location>
</feature>
<feature type="modified residue" description="Phosphoserine" evidence="2">
    <location>
        <position position="983"/>
    </location>
</feature>
<feature type="modified residue" description="Phosphoserine" evidence="2">
    <location>
        <position position="1028"/>
    </location>
</feature>
<feature type="modified residue" description="Phosphothreonine" evidence="2">
    <location>
        <position position="1307"/>
    </location>
</feature>
<feature type="modified residue" description="Phosphoserine" evidence="2">
    <location>
        <position position="1316"/>
    </location>
</feature>
<feature type="modified residue" description="Phosphoserine" evidence="2">
    <location>
        <position position="1433"/>
    </location>
</feature>
<feature type="modified residue" description="Phosphoserine" evidence="2">
    <location>
        <position position="1505"/>
    </location>
</feature>
<feature type="modified residue" description="Phosphoserine" evidence="2">
    <location>
        <position position="1602"/>
    </location>
</feature>
<feature type="modified residue" description="N6-acetyllysine" evidence="10">
    <location>
        <position position="1780"/>
    </location>
</feature>
<feature type="modified residue" description="Phosphoserine" evidence="2">
    <location>
        <position position="2083"/>
    </location>
</feature>
<feature type="modified residue" description="Phosphoserine" evidence="2">
    <location>
        <position position="2113"/>
    </location>
</feature>
<feature type="modified residue" description="Phosphoserine" evidence="2">
    <location>
        <position position="2369"/>
    </location>
</feature>
<feature type="modified residue" description="Phosphoserine" evidence="2">
    <location>
        <position position="2465"/>
    </location>
</feature>
<feature type="modified residue" description="Phosphoserine" evidence="2">
    <location>
        <position position="2478"/>
    </location>
</feature>
<feature type="modified residue" description="Phosphoserine" evidence="2">
    <location>
        <position position="2481"/>
    </location>
</feature>
<feature type="modified residue" description="Phosphoserine" evidence="2">
    <location>
        <position position="2492"/>
    </location>
</feature>
<feature type="modified residue" description="N6-succinyllysine" evidence="10">
    <location>
        <position position="2518"/>
    </location>
</feature>
<feature type="modified residue" description="N6-succinyllysine" evidence="10">
    <location>
        <position position="2524"/>
    </location>
</feature>
<feature type="modified residue" description="N6-acetyllysine" evidence="2">
    <location>
        <position position="2576"/>
    </location>
</feature>
<feature type="cross-link" description="Glycyl lysine isopeptide (Lys-Gly) (interchain with G-Cter in ISG15)" evidence="1">
    <location>
        <position position="2468"/>
    </location>
</feature>
<name>FLNB_MOUSE</name>
<organism>
    <name type="scientific">Mus musculus</name>
    <name type="common">Mouse</name>
    <dbReference type="NCBI Taxonomy" id="10090"/>
    <lineage>
        <taxon>Eukaryota</taxon>
        <taxon>Metazoa</taxon>
        <taxon>Chordata</taxon>
        <taxon>Craniata</taxon>
        <taxon>Vertebrata</taxon>
        <taxon>Euteleostomi</taxon>
        <taxon>Mammalia</taxon>
        <taxon>Eutheria</taxon>
        <taxon>Euarchontoglires</taxon>
        <taxon>Glires</taxon>
        <taxon>Rodentia</taxon>
        <taxon>Myomorpha</taxon>
        <taxon>Muroidea</taxon>
        <taxon>Muridae</taxon>
        <taxon>Murinae</taxon>
        <taxon>Mus</taxon>
        <taxon>Mus</taxon>
    </lineage>
</organism>